<proteinExistence type="inferred from homology"/>
<keyword id="KW-0028">Amino-acid biosynthesis</keyword>
<keyword id="KW-0057">Aromatic amino acid biosynthesis</keyword>
<keyword id="KW-0521">NADP</keyword>
<keyword id="KW-0560">Oxidoreductase</keyword>
<evidence type="ECO:0000255" key="1">
    <source>
        <dbReference type="HAMAP-Rule" id="MF_00222"/>
    </source>
</evidence>
<feature type="chain" id="PRO_0000136026" description="Shikimate dehydrogenase (NADP(+))">
    <location>
        <begin position="1"/>
        <end position="280"/>
    </location>
</feature>
<feature type="active site" description="Proton acceptor" evidence="1">
    <location>
        <position position="69"/>
    </location>
</feature>
<feature type="binding site" evidence="1">
    <location>
        <begin position="18"/>
        <end position="20"/>
    </location>
    <ligand>
        <name>shikimate</name>
        <dbReference type="ChEBI" id="CHEBI:36208"/>
    </ligand>
</feature>
<feature type="binding site" evidence="1">
    <location>
        <position position="65"/>
    </location>
    <ligand>
        <name>shikimate</name>
        <dbReference type="ChEBI" id="CHEBI:36208"/>
    </ligand>
</feature>
<feature type="binding site" evidence="1">
    <location>
        <position position="90"/>
    </location>
    <ligand>
        <name>shikimate</name>
        <dbReference type="ChEBI" id="CHEBI:36208"/>
    </ligand>
</feature>
<feature type="binding site" evidence="1">
    <location>
        <position position="105"/>
    </location>
    <ligand>
        <name>shikimate</name>
        <dbReference type="ChEBI" id="CHEBI:36208"/>
    </ligand>
</feature>
<feature type="binding site" evidence="1">
    <location>
        <begin position="130"/>
        <end position="134"/>
    </location>
    <ligand>
        <name>NADP(+)</name>
        <dbReference type="ChEBI" id="CHEBI:58349"/>
    </ligand>
</feature>
<feature type="binding site" evidence="1">
    <location>
        <begin position="154"/>
        <end position="159"/>
    </location>
    <ligand>
        <name>NADP(+)</name>
        <dbReference type="ChEBI" id="CHEBI:58349"/>
    </ligand>
</feature>
<feature type="binding site" evidence="1">
    <location>
        <position position="219"/>
    </location>
    <ligand>
        <name>NADP(+)</name>
        <dbReference type="ChEBI" id="CHEBI:58349"/>
    </ligand>
</feature>
<feature type="binding site" evidence="1">
    <location>
        <position position="221"/>
    </location>
    <ligand>
        <name>shikimate</name>
        <dbReference type="ChEBI" id="CHEBI:36208"/>
    </ligand>
</feature>
<feature type="binding site" evidence="1">
    <location>
        <position position="242"/>
    </location>
    <ligand>
        <name>NADP(+)</name>
        <dbReference type="ChEBI" id="CHEBI:58349"/>
    </ligand>
</feature>
<comment type="function">
    <text evidence="1">Involved in the biosynthesis of the chorismate, which leads to the biosynthesis of aromatic amino acids. Catalyzes the reversible NADPH linked reduction of 3-dehydroshikimate (DHSA) to yield shikimate (SA).</text>
</comment>
<comment type="catalytic activity">
    <reaction evidence="1">
        <text>shikimate + NADP(+) = 3-dehydroshikimate + NADPH + H(+)</text>
        <dbReference type="Rhea" id="RHEA:17737"/>
        <dbReference type="ChEBI" id="CHEBI:15378"/>
        <dbReference type="ChEBI" id="CHEBI:16630"/>
        <dbReference type="ChEBI" id="CHEBI:36208"/>
        <dbReference type="ChEBI" id="CHEBI:57783"/>
        <dbReference type="ChEBI" id="CHEBI:58349"/>
        <dbReference type="EC" id="1.1.1.25"/>
    </reaction>
</comment>
<comment type="pathway">
    <text evidence="1">Metabolic intermediate biosynthesis; chorismate biosynthesis; chorismate from D-erythrose 4-phosphate and phosphoenolpyruvate: step 4/7.</text>
</comment>
<comment type="subunit">
    <text evidence="1">Homodimer.</text>
</comment>
<comment type="similarity">
    <text evidence="1">Belongs to the shikimate dehydrogenase family.</text>
</comment>
<accession>Q98DY3</accession>
<gene>
    <name evidence="1" type="primary">aroE</name>
    <name type="ordered locus">mlr4492</name>
</gene>
<name>AROE_RHILO</name>
<reference key="1">
    <citation type="journal article" date="2000" name="DNA Res.">
        <title>Complete genome structure of the nitrogen-fixing symbiotic bacterium Mesorhizobium loti.</title>
        <authorList>
            <person name="Kaneko T."/>
            <person name="Nakamura Y."/>
            <person name="Sato S."/>
            <person name="Asamizu E."/>
            <person name="Kato T."/>
            <person name="Sasamoto S."/>
            <person name="Watanabe A."/>
            <person name="Idesawa K."/>
            <person name="Ishikawa A."/>
            <person name="Kawashima K."/>
            <person name="Kimura T."/>
            <person name="Kishida Y."/>
            <person name="Kiyokawa C."/>
            <person name="Kohara M."/>
            <person name="Matsumoto M."/>
            <person name="Matsuno A."/>
            <person name="Mochizuki Y."/>
            <person name="Nakayama S."/>
            <person name="Nakazaki N."/>
            <person name="Shimpo S."/>
            <person name="Sugimoto M."/>
            <person name="Takeuchi C."/>
            <person name="Yamada M."/>
            <person name="Tabata S."/>
        </authorList>
    </citation>
    <scope>NUCLEOTIDE SEQUENCE [LARGE SCALE GENOMIC DNA]</scope>
    <source>
        <strain>LMG 29417 / CECT 9101 / MAFF 303099</strain>
    </source>
</reference>
<organism>
    <name type="scientific">Mesorhizobium japonicum (strain LMG 29417 / CECT 9101 / MAFF 303099)</name>
    <name type="common">Mesorhizobium loti (strain MAFF 303099)</name>
    <dbReference type="NCBI Taxonomy" id="266835"/>
    <lineage>
        <taxon>Bacteria</taxon>
        <taxon>Pseudomonadati</taxon>
        <taxon>Pseudomonadota</taxon>
        <taxon>Alphaproteobacteria</taxon>
        <taxon>Hyphomicrobiales</taxon>
        <taxon>Phyllobacteriaceae</taxon>
        <taxon>Mesorhizobium</taxon>
    </lineage>
</organism>
<sequence length="280" mass="29401">MVEATKKAFVTGHPIKHSRSPKIHGHWLAQHGIDGSYEAIDVAPQDFAEFIAALQANGFRGGNVTIPHKEAAFAVAQRRDQAAEEIGAVNTLWFEDGVLRGGNTDGHGFAANLDDCAPGWANTGPAVVLGAGGASRAVIQALKQRGFSDIRIVNRTLARAQELRDRFGAGVSAHGTAATDELLADAGLLVNTTALGMVGNEGLAADPALLPDHAIVTDLVYVPLETPLLAAARARGLKTVDGLGMLLNQAVPGFEHWFGVRPQVTAELRALIVADLVPKP</sequence>
<dbReference type="EC" id="1.1.1.25" evidence="1"/>
<dbReference type="EMBL" id="BA000012">
    <property type="protein sequence ID" value="BAB51137.1"/>
    <property type="molecule type" value="Genomic_DNA"/>
</dbReference>
<dbReference type="RefSeq" id="WP_010912479.1">
    <property type="nucleotide sequence ID" value="NC_002678.2"/>
</dbReference>
<dbReference type="SMR" id="Q98DY3"/>
<dbReference type="KEGG" id="mlo:mlr4492"/>
<dbReference type="PATRIC" id="fig|266835.9.peg.3550"/>
<dbReference type="eggNOG" id="COG0169">
    <property type="taxonomic scope" value="Bacteria"/>
</dbReference>
<dbReference type="HOGENOM" id="CLU_044063_2_0_5"/>
<dbReference type="UniPathway" id="UPA00053">
    <property type="reaction ID" value="UER00087"/>
</dbReference>
<dbReference type="Proteomes" id="UP000000552">
    <property type="component" value="Chromosome"/>
</dbReference>
<dbReference type="GO" id="GO:0005829">
    <property type="term" value="C:cytosol"/>
    <property type="evidence" value="ECO:0007669"/>
    <property type="project" value="TreeGrafter"/>
</dbReference>
<dbReference type="GO" id="GO:0050661">
    <property type="term" value="F:NADP binding"/>
    <property type="evidence" value="ECO:0007669"/>
    <property type="project" value="InterPro"/>
</dbReference>
<dbReference type="GO" id="GO:0004764">
    <property type="term" value="F:shikimate 3-dehydrogenase (NADP+) activity"/>
    <property type="evidence" value="ECO:0007669"/>
    <property type="project" value="UniProtKB-UniRule"/>
</dbReference>
<dbReference type="GO" id="GO:0008652">
    <property type="term" value="P:amino acid biosynthetic process"/>
    <property type="evidence" value="ECO:0007669"/>
    <property type="project" value="UniProtKB-KW"/>
</dbReference>
<dbReference type="GO" id="GO:0009073">
    <property type="term" value="P:aromatic amino acid family biosynthetic process"/>
    <property type="evidence" value="ECO:0007669"/>
    <property type="project" value="UniProtKB-KW"/>
</dbReference>
<dbReference type="GO" id="GO:0009423">
    <property type="term" value="P:chorismate biosynthetic process"/>
    <property type="evidence" value="ECO:0007669"/>
    <property type="project" value="UniProtKB-UniRule"/>
</dbReference>
<dbReference type="GO" id="GO:0019632">
    <property type="term" value="P:shikimate metabolic process"/>
    <property type="evidence" value="ECO:0007669"/>
    <property type="project" value="InterPro"/>
</dbReference>
<dbReference type="CDD" id="cd01065">
    <property type="entry name" value="NAD_bind_Shikimate_DH"/>
    <property type="match status" value="1"/>
</dbReference>
<dbReference type="Gene3D" id="3.40.50.10860">
    <property type="entry name" value="Leucine Dehydrogenase, chain A, domain 1"/>
    <property type="match status" value="1"/>
</dbReference>
<dbReference type="Gene3D" id="3.40.50.720">
    <property type="entry name" value="NAD(P)-binding Rossmann-like Domain"/>
    <property type="match status" value="1"/>
</dbReference>
<dbReference type="HAMAP" id="MF_00222">
    <property type="entry name" value="Shikimate_DH_AroE"/>
    <property type="match status" value="1"/>
</dbReference>
<dbReference type="InterPro" id="IPR046346">
    <property type="entry name" value="Aminoacid_DH-like_N_sf"/>
</dbReference>
<dbReference type="InterPro" id="IPR036291">
    <property type="entry name" value="NAD(P)-bd_dom_sf"/>
</dbReference>
<dbReference type="InterPro" id="IPR041121">
    <property type="entry name" value="SDH_C"/>
</dbReference>
<dbReference type="InterPro" id="IPR011342">
    <property type="entry name" value="Shikimate_DH"/>
</dbReference>
<dbReference type="InterPro" id="IPR013708">
    <property type="entry name" value="Shikimate_DH-bd_N"/>
</dbReference>
<dbReference type="InterPro" id="IPR022893">
    <property type="entry name" value="Shikimate_DH_fam"/>
</dbReference>
<dbReference type="InterPro" id="IPR006151">
    <property type="entry name" value="Shikm_DH/Glu-tRNA_Rdtase"/>
</dbReference>
<dbReference type="NCBIfam" id="TIGR00507">
    <property type="entry name" value="aroE"/>
    <property type="match status" value="1"/>
</dbReference>
<dbReference type="NCBIfam" id="NF001312">
    <property type="entry name" value="PRK00258.1-4"/>
    <property type="match status" value="1"/>
</dbReference>
<dbReference type="PANTHER" id="PTHR21089:SF1">
    <property type="entry name" value="BIFUNCTIONAL 3-DEHYDROQUINATE DEHYDRATASE_SHIKIMATE DEHYDROGENASE, CHLOROPLASTIC"/>
    <property type="match status" value="1"/>
</dbReference>
<dbReference type="PANTHER" id="PTHR21089">
    <property type="entry name" value="SHIKIMATE DEHYDROGENASE"/>
    <property type="match status" value="1"/>
</dbReference>
<dbReference type="Pfam" id="PF18317">
    <property type="entry name" value="SDH_C"/>
    <property type="match status" value="1"/>
</dbReference>
<dbReference type="Pfam" id="PF01488">
    <property type="entry name" value="Shikimate_DH"/>
    <property type="match status" value="1"/>
</dbReference>
<dbReference type="Pfam" id="PF08501">
    <property type="entry name" value="Shikimate_dh_N"/>
    <property type="match status" value="1"/>
</dbReference>
<dbReference type="SUPFAM" id="SSF53223">
    <property type="entry name" value="Aminoacid dehydrogenase-like, N-terminal domain"/>
    <property type="match status" value="1"/>
</dbReference>
<dbReference type="SUPFAM" id="SSF51735">
    <property type="entry name" value="NAD(P)-binding Rossmann-fold domains"/>
    <property type="match status" value="1"/>
</dbReference>
<protein>
    <recommendedName>
        <fullName evidence="1">Shikimate dehydrogenase (NADP(+))</fullName>
        <shortName evidence="1">SDH</shortName>
        <ecNumber evidence="1">1.1.1.25</ecNumber>
    </recommendedName>
</protein>